<proteinExistence type="inferred from homology"/>
<comment type="function">
    <text evidence="1">May play a role in DNA repair. It seems to be involved in an RecBC-independent recombinational process of DNA repair. It may act with RecF and RecO.</text>
</comment>
<comment type="similarity">
    <text evidence="1">Belongs to the RecR family.</text>
</comment>
<protein>
    <recommendedName>
        <fullName evidence="1">Recombination protein RecR</fullName>
    </recommendedName>
</protein>
<keyword id="KW-0227">DNA damage</keyword>
<keyword id="KW-0233">DNA recombination</keyword>
<keyword id="KW-0234">DNA repair</keyword>
<keyword id="KW-0479">Metal-binding</keyword>
<keyword id="KW-0862">Zinc</keyword>
<keyword id="KW-0863">Zinc-finger</keyword>
<gene>
    <name evidence="1" type="primary">recR</name>
    <name type="ordered locus">SAB0429</name>
</gene>
<name>RECR_STAAB</name>
<evidence type="ECO:0000255" key="1">
    <source>
        <dbReference type="HAMAP-Rule" id="MF_00017"/>
    </source>
</evidence>
<sequence>MHYPEPISKLIDSFMKLPGIGPKTAQRLAFHTLDMKEDDVVQFAKALVDVKRELTYCSVCGHITENDPCYICEDKQRDRSVICVVEDDKDVIAMEKMREYKGLYHVLHGSISPMDGIGPEDINIPSLIERLKNDEVSELILAMNPNLEGESTAMYISRLVKPIGIKVTRLAQGLSVGGDLEYADEVTLSKAIAGRTEM</sequence>
<accession>Q2YVW5</accession>
<dbReference type="EMBL" id="AJ938182">
    <property type="protein sequence ID" value="CAI80117.1"/>
    <property type="molecule type" value="Genomic_DNA"/>
</dbReference>
<dbReference type="RefSeq" id="WP_000559156.1">
    <property type="nucleotide sequence ID" value="NC_007622.1"/>
</dbReference>
<dbReference type="SMR" id="Q2YVW5"/>
<dbReference type="KEGG" id="sab:SAB0429"/>
<dbReference type="HOGENOM" id="CLU_060739_1_0_9"/>
<dbReference type="GO" id="GO:0003677">
    <property type="term" value="F:DNA binding"/>
    <property type="evidence" value="ECO:0007669"/>
    <property type="project" value="UniProtKB-UniRule"/>
</dbReference>
<dbReference type="GO" id="GO:0008270">
    <property type="term" value="F:zinc ion binding"/>
    <property type="evidence" value="ECO:0007669"/>
    <property type="project" value="UniProtKB-KW"/>
</dbReference>
<dbReference type="GO" id="GO:0006310">
    <property type="term" value="P:DNA recombination"/>
    <property type="evidence" value="ECO:0007669"/>
    <property type="project" value="UniProtKB-UniRule"/>
</dbReference>
<dbReference type="GO" id="GO:0006281">
    <property type="term" value="P:DNA repair"/>
    <property type="evidence" value="ECO:0007669"/>
    <property type="project" value="UniProtKB-UniRule"/>
</dbReference>
<dbReference type="CDD" id="cd01025">
    <property type="entry name" value="TOPRIM_recR"/>
    <property type="match status" value="1"/>
</dbReference>
<dbReference type="Gene3D" id="3.30.60.80">
    <property type="match status" value="1"/>
</dbReference>
<dbReference type="Gene3D" id="3.40.1360.10">
    <property type="match status" value="1"/>
</dbReference>
<dbReference type="Gene3D" id="6.10.250.240">
    <property type="match status" value="1"/>
</dbReference>
<dbReference type="Gene3D" id="1.10.8.420">
    <property type="entry name" value="RecR Domain 1"/>
    <property type="match status" value="1"/>
</dbReference>
<dbReference type="HAMAP" id="MF_00017">
    <property type="entry name" value="RecR"/>
    <property type="match status" value="1"/>
</dbReference>
<dbReference type="InterPro" id="IPR000093">
    <property type="entry name" value="DNA_Rcmb_RecR"/>
</dbReference>
<dbReference type="InterPro" id="IPR003583">
    <property type="entry name" value="Hlx-hairpin-Hlx_DNA-bd_motif"/>
</dbReference>
<dbReference type="InterPro" id="IPR023627">
    <property type="entry name" value="Rcmb_RecR"/>
</dbReference>
<dbReference type="InterPro" id="IPR015967">
    <property type="entry name" value="Rcmb_RecR_Znf"/>
</dbReference>
<dbReference type="InterPro" id="IPR006171">
    <property type="entry name" value="TOPRIM_dom"/>
</dbReference>
<dbReference type="InterPro" id="IPR034137">
    <property type="entry name" value="TOPRIM_RecR"/>
</dbReference>
<dbReference type="NCBIfam" id="TIGR00615">
    <property type="entry name" value="recR"/>
    <property type="match status" value="1"/>
</dbReference>
<dbReference type="PANTHER" id="PTHR30446">
    <property type="entry name" value="RECOMBINATION PROTEIN RECR"/>
    <property type="match status" value="1"/>
</dbReference>
<dbReference type="PANTHER" id="PTHR30446:SF0">
    <property type="entry name" value="RECOMBINATION PROTEIN RECR"/>
    <property type="match status" value="1"/>
</dbReference>
<dbReference type="Pfam" id="PF21175">
    <property type="entry name" value="RecR_C"/>
    <property type="match status" value="1"/>
</dbReference>
<dbReference type="Pfam" id="PF21176">
    <property type="entry name" value="RecR_HhH"/>
    <property type="match status" value="1"/>
</dbReference>
<dbReference type="Pfam" id="PF02132">
    <property type="entry name" value="RecR_ZnF"/>
    <property type="match status" value="1"/>
</dbReference>
<dbReference type="Pfam" id="PF13662">
    <property type="entry name" value="Toprim_4"/>
    <property type="match status" value="1"/>
</dbReference>
<dbReference type="SMART" id="SM00278">
    <property type="entry name" value="HhH1"/>
    <property type="match status" value="1"/>
</dbReference>
<dbReference type="SMART" id="SM00493">
    <property type="entry name" value="TOPRIM"/>
    <property type="match status" value="1"/>
</dbReference>
<dbReference type="SUPFAM" id="SSF111304">
    <property type="entry name" value="Recombination protein RecR"/>
    <property type="match status" value="1"/>
</dbReference>
<dbReference type="PROSITE" id="PS01300">
    <property type="entry name" value="RECR"/>
    <property type="match status" value="1"/>
</dbReference>
<dbReference type="PROSITE" id="PS50880">
    <property type="entry name" value="TOPRIM"/>
    <property type="match status" value="1"/>
</dbReference>
<reference key="1">
    <citation type="journal article" date="2007" name="PLoS ONE">
        <title>Molecular correlates of host specialization in Staphylococcus aureus.</title>
        <authorList>
            <person name="Herron-Olson L."/>
            <person name="Fitzgerald J.R."/>
            <person name="Musser J.M."/>
            <person name="Kapur V."/>
        </authorList>
    </citation>
    <scope>NUCLEOTIDE SEQUENCE [LARGE SCALE GENOMIC DNA]</scope>
    <source>
        <strain>bovine RF122 / ET3-1</strain>
    </source>
</reference>
<organism>
    <name type="scientific">Staphylococcus aureus (strain bovine RF122 / ET3-1)</name>
    <dbReference type="NCBI Taxonomy" id="273036"/>
    <lineage>
        <taxon>Bacteria</taxon>
        <taxon>Bacillati</taxon>
        <taxon>Bacillota</taxon>
        <taxon>Bacilli</taxon>
        <taxon>Bacillales</taxon>
        <taxon>Staphylococcaceae</taxon>
        <taxon>Staphylococcus</taxon>
    </lineage>
</organism>
<feature type="chain" id="PRO_1000001621" description="Recombination protein RecR">
    <location>
        <begin position="1"/>
        <end position="198"/>
    </location>
</feature>
<feature type="domain" description="Toprim" evidence="1">
    <location>
        <begin position="80"/>
        <end position="175"/>
    </location>
</feature>
<feature type="zinc finger region" description="C4-type" evidence="1">
    <location>
        <begin position="57"/>
        <end position="72"/>
    </location>
</feature>